<gene>
    <name evidence="11" type="primary">AacuN</name>
    <name type="ORF">ASPACDRAFT_33834</name>
</gene>
<protein>
    <recommendedName>
        <fullName evidence="10">Short chain dehydrogenase/reductase AacuN</fullName>
        <shortName evidence="10">SDR AacuN</shortName>
        <ecNumber evidence="3">1.3.1.-</ecNumber>
    </recommendedName>
    <alternativeName>
        <fullName evidence="10">Secalonic acid biosynthesis cluster protein N</fullName>
    </alternativeName>
</protein>
<sequence length="264" mass="27805">MTVSSAPYCLAGQVALVTGSGRGIGAAIAVELGRLGASVVVNYANSSAAAEKVVAEIQSLGSAAIAIQADVREVSQTVRLMDEAVAHFGGLDIVCSNAGVVSFGHLGEVTEEEFDRVFSLNTRGQFFVAREAYRHLNEGGRIILMSSNTAHDFSVPKHSLYSGSKGAIDSFVRVFAKDCGDKKITVNAVAPGGTVTDMFHAVSHHYIPNGEKYTAEERQQMAAHASPLMRNGFPLDIARVVCFLASKEGEWVNGKSLTVDGGAA</sequence>
<comment type="function">
    <text evidence="7 9 13">Atrochrysone carboxylic acid synthase; part of the gene cluster that mediates the biosynthesis of the tetrahydroxanthone dimer secalonic acid D (PubMed:30996871, PubMed:33891392). The pathway begins with the synthesis of atrochrysone thioester by the polyketide synthase AacuL (Probable). The atrochrysone carboxyl ACP thioesterase AacuM then breaks the thioester bond and releases the atrochrysone carboxylic acid from AacuL (Probable). Atrochrysone carboxylic acid is decarboxylated by the decarboxylase AacuI, and oxidized by the anthrone oxygenase AacuG to yield emodin (Probable). Emodin is then reduced to emodin hydroquinone by a yet unidentified oxidoreductase (Probable). A-ring reduction by the short chain dehydrogenase AacuN, dehydration by the scytalone dehydratase-like protein AacuK and probable spontaneous re-oxidation, results in overall deoxygenation to chrysophanol (PubMed:33891392). Baeyer-Villiger oxidation by the Baeyer-Villiger monooxygenase (BVMO) AacuH then yields monodictyphenone (PubMed:33891392). Monodictyphenone is transformed into compounds with the tetrahydroxanthone skeleton via methylesterification by the methyltransferase AacuQ, followed by the action of the flavin-dependent monooxygenase AacuC, the isomerase AacuP, and the short chain dehydrogenase/reductase AacuF or AacuD (PubMed:33891392). AacuF and AacuD should accept the same compound as a substrate but perform the ketoreduction with a different stereoselectivity, thus yielding blennolides B and A, respectively (PubMed:33891392). In the final step of the biosynthesis, the cytochrome P450 monooxygenase AacuE accepts blennolide B and/or blennolide A to conduct the dimerization reaction to furnish the tetrahydroxanthone dimers, secalonic acids D, B, and F (PubMed:33891392).</text>
</comment>
<comment type="catalytic activity">
    <reaction evidence="3">
        <text>3,8,9,10-tetrahydroxy-6-methyl-1,4-dihydroanthracen-1-one + NADPH + H(+) = (3R)-3,8,9,10-tetrahydroxy-6-methyl-1,2,3,4-tetrahydroanthracen-1-one + NADP(+)</text>
        <dbReference type="Rhea" id="RHEA:64292"/>
        <dbReference type="ChEBI" id="CHEBI:15378"/>
        <dbReference type="ChEBI" id="CHEBI:57783"/>
        <dbReference type="ChEBI" id="CHEBI:58349"/>
        <dbReference type="ChEBI" id="CHEBI:150020"/>
        <dbReference type="ChEBI" id="CHEBI:150021"/>
    </reaction>
    <physiologicalReaction direction="left-to-right" evidence="3">
        <dbReference type="Rhea" id="RHEA:64293"/>
    </physiologicalReaction>
</comment>
<comment type="pathway">
    <text evidence="13">Secondary metabolite biosynthesis.</text>
</comment>
<comment type="biotechnology">
    <text evidence="4 5 6 8">Secalonic acids show unprecedented anticancer activities against various human cancer cells and might be interesting for further derivatization, targeting diseases such as cancer.</text>
</comment>
<comment type="similarity">
    <text evidence="12">Belongs to the short-chain dehydrogenases/reductases (SDR) family.</text>
</comment>
<keyword id="KW-0521">NADP</keyword>
<keyword id="KW-0560">Oxidoreductase</keyword>
<keyword id="KW-1185">Reference proteome</keyword>
<reference key="1">
    <citation type="journal article" date="2017" name="Genome Biol.">
        <title>Comparative genomics reveals high biological diversity and specific adaptations in the industrially and medically important fungal genus Aspergillus.</title>
        <authorList>
            <person name="de Vries R.P."/>
            <person name="Riley R."/>
            <person name="Wiebenga A."/>
            <person name="Aguilar-Osorio G."/>
            <person name="Amillis S."/>
            <person name="Uchima C.A."/>
            <person name="Anderluh G."/>
            <person name="Asadollahi M."/>
            <person name="Askin M."/>
            <person name="Barry K."/>
            <person name="Battaglia E."/>
            <person name="Bayram O."/>
            <person name="Benocci T."/>
            <person name="Braus-Stromeyer S.A."/>
            <person name="Caldana C."/>
            <person name="Canovas D."/>
            <person name="Cerqueira G.C."/>
            <person name="Chen F."/>
            <person name="Chen W."/>
            <person name="Choi C."/>
            <person name="Clum A."/>
            <person name="Dos Santos R.A."/>
            <person name="Damasio A.R."/>
            <person name="Diallinas G."/>
            <person name="Emri T."/>
            <person name="Fekete E."/>
            <person name="Flipphi M."/>
            <person name="Freyberg S."/>
            <person name="Gallo A."/>
            <person name="Gournas C."/>
            <person name="Habgood R."/>
            <person name="Hainaut M."/>
            <person name="Harispe M.L."/>
            <person name="Henrissat B."/>
            <person name="Hilden K.S."/>
            <person name="Hope R."/>
            <person name="Hossain A."/>
            <person name="Karabika E."/>
            <person name="Karaffa L."/>
            <person name="Karanyi Z."/>
            <person name="Krasevec N."/>
            <person name="Kuo A."/>
            <person name="Kusch H."/>
            <person name="LaButti K."/>
            <person name="Lagendijk E.L."/>
            <person name="Lapidus A."/>
            <person name="Levasseur A."/>
            <person name="Lindquist E."/>
            <person name="Lipzen A."/>
            <person name="Logrieco A.F."/>
            <person name="MacCabe A."/>
            <person name="Maekelae M.R."/>
            <person name="Malavazi I."/>
            <person name="Melin P."/>
            <person name="Meyer V."/>
            <person name="Mielnichuk N."/>
            <person name="Miskei M."/>
            <person name="Molnar A.P."/>
            <person name="Mule G."/>
            <person name="Ngan C.Y."/>
            <person name="Orejas M."/>
            <person name="Orosz E."/>
            <person name="Ouedraogo J.P."/>
            <person name="Overkamp K.M."/>
            <person name="Park H.-S."/>
            <person name="Perrone G."/>
            <person name="Piumi F."/>
            <person name="Punt P.J."/>
            <person name="Ram A.F."/>
            <person name="Ramon A."/>
            <person name="Rauscher S."/>
            <person name="Record E."/>
            <person name="Riano-Pachon D.M."/>
            <person name="Robert V."/>
            <person name="Roehrig J."/>
            <person name="Ruller R."/>
            <person name="Salamov A."/>
            <person name="Salih N.S."/>
            <person name="Samson R.A."/>
            <person name="Sandor E."/>
            <person name="Sanguinetti M."/>
            <person name="Schuetze T."/>
            <person name="Sepcic K."/>
            <person name="Shelest E."/>
            <person name="Sherlock G."/>
            <person name="Sophianopoulou V."/>
            <person name="Squina F.M."/>
            <person name="Sun H."/>
            <person name="Susca A."/>
            <person name="Todd R.B."/>
            <person name="Tsang A."/>
            <person name="Unkles S.E."/>
            <person name="van de Wiele N."/>
            <person name="van Rossen-Uffink D."/>
            <person name="Oliveira J.V."/>
            <person name="Vesth T.C."/>
            <person name="Visser J."/>
            <person name="Yu J.-H."/>
            <person name="Zhou M."/>
            <person name="Andersen M.R."/>
            <person name="Archer D.B."/>
            <person name="Baker S.E."/>
            <person name="Benoit I."/>
            <person name="Brakhage A.A."/>
            <person name="Braus G.H."/>
            <person name="Fischer R."/>
            <person name="Frisvad J.C."/>
            <person name="Goldman G.H."/>
            <person name="Houbraken J."/>
            <person name="Oakley B."/>
            <person name="Pocsi I."/>
            <person name="Scazzocchio C."/>
            <person name="Seiboth B."/>
            <person name="vanKuyk P.A."/>
            <person name="Wortman J."/>
            <person name="Dyer P.S."/>
            <person name="Grigoriev I.V."/>
        </authorList>
    </citation>
    <scope>NUCLEOTIDE SEQUENCE [LARGE SCALE GENOMIC DNA]</scope>
    <source>
        <strain>ATCC 16872 / CBS 172.66 / WB 5094</strain>
    </source>
</reference>
<reference key="2">
    <citation type="journal article" date="2017" name="Neoplasma">
        <title>Secalonic acid- F inhibited cell growth more effectively than 5-fluorouracil on hepatocellular carcinoma in vitro and in vivo.</title>
        <authorList>
            <person name="Gao X."/>
            <person name="Sun H.L."/>
            <person name="Liu D.S."/>
            <person name="Zhang J.R."/>
            <person name="Zhang J."/>
            <person name="Yan M.M."/>
            <person name="Pan X.H."/>
        </authorList>
    </citation>
    <scope>BIOTECHNOLOGY</scope>
</reference>
<reference key="3">
    <citation type="journal article" date="2018" name="Curr. Microbiol.">
        <title>Secondary Metabolites and Their Biological Activity from Aspergillus aculeatus KKU-CT2.</title>
        <authorList>
            <person name="Yodsing N."/>
            <person name="Lekphrom R."/>
            <person name="Sangsopha W."/>
            <person name="Aimi T."/>
            <person name="Boonlue S."/>
        </authorList>
    </citation>
    <scope>BIOTECHNOLOGY</scope>
</reference>
<reference key="4">
    <citation type="journal article" date="2019" name="Chem. Sci.">
        <title>Structure revision of cryptosporioptides and determination of the genetic basis for dimeric xanthone biosynthesis in fungi.</title>
        <authorList>
            <person name="Greco C."/>
            <person name="de Mattos-Shipley K."/>
            <person name="Bailey A.M."/>
            <person name="Mulholland N.P."/>
            <person name="Vincent J.L."/>
            <person name="Willis C.L."/>
            <person name="Cox R.J."/>
            <person name="Simpson T.J."/>
        </authorList>
    </citation>
    <scope>IDENTIFICATION</scope>
    <scope>FUNCTION</scope>
</reference>
<reference key="5">
    <citation type="journal article" date="2019" name="Molecules">
        <title>Secalonic Acid-F, a Novel Mycotoxin, Represses the Progression of Hepatocellular Carcinoma via MARCH1 Regulation of the PI3K/AKT/beta-catenin Signaling Pathway.</title>
        <authorList>
            <person name="Xie L."/>
            <person name="Li M."/>
            <person name="Liu D."/>
            <person name="Wang X."/>
            <person name="Wang P."/>
            <person name="Dai H."/>
            <person name="Yang W."/>
            <person name="Liu W."/>
            <person name="Hu X."/>
            <person name="Zhao M."/>
        </authorList>
    </citation>
    <scope>BIOTECHNOLOGY</scope>
</reference>
<reference key="6">
    <citation type="journal article" date="2020" name="ACS Omega">
        <title>Discovery of a Secalonic Acid Derivative from Aspergillus aculeatus, an Endophyte of Rosa damascena Mill., Triggers Apoptosis in MDA-MB-231 Triple Negative Breast Cancer Cells.</title>
        <authorList>
            <person name="Farooq S."/>
            <person name="Qayum A."/>
            <person name="Nalli Y."/>
            <person name="Lauro G."/>
            <person name="Chini M.G."/>
            <person name="Bifulco G."/>
            <person name="Chaubey A."/>
            <person name="Singh S.K."/>
            <person name="Riyaz-Ul-Hassan S."/>
            <person name="Ali A."/>
        </authorList>
    </citation>
    <scope>BIOTECHNOLOGY</scope>
</reference>
<reference key="7">
    <citation type="journal article" date="2021" name="J. Nat. Prod.">
        <title>Heterologous biosynthesis of tetrahydroxanthone dimers: determination of key factors for selective or divergent synthesis.</title>
        <authorList>
            <person name="Wei X."/>
            <person name="Chen X."/>
            <person name="Chen L."/>
            <person name="Yan D."/>
            <person name="Wang W.G."/>
            <person name="Matsuda Y."/>
        </authorList>
    </citation>
    <scope>FUNCTION</scope>
    <scope>PATHWAY</scope>
</reference>
<name>AACUN_ASPA1</name>
<organism>
    <name type="scientific">Aspergillus aculeatus (strain ATCC 16872 / CBS 172.66 / WB 5094)</name>
    <dbReference type="NCBI Taxonomy" id="690307"/>
    <lineage>
        <taxon>Eukaryota</taxon>
        <taxon>Fungi</taxon>
        <taxon>Dikarya</taxon>
        <taxon>Ascomycota</taxon>
        <taxon>Pezizomycotina</taxon>
        <taxon>Eurotiomycetes</taxon>
        <taxon>Eurotiomycetidae</taxon>
        <taxon>Eurotiales</taxon>
        <taxon>Aspergillaceae</taxon>
        <taxon>Aspergillus</taxon>
        <taxon>Aspergillus subgen. Circumdati</taxon>
    </lineage>
</organism>
<evidence type="ECO:0000250" key="1">
    <source>
        <dbReference type="UniProtKB" id="L0E2Z4"/>
    </source>
</evidence>
<evidence type="ECO:0000250" key="2">
    <source>
        <dbReference type="UniProtKB" id="O93868"/>
    </source>
</evidence>
<evidence type="ECO:0000250" key="3">
    <source>
        <dbReference type="UniProtKB" id="Q5BH34"/>
    </source>
</evidence>
<evidence type="ECO:0000269" key="4">
    <source>
    </source>
</evidence>
<evidence type="ECO:0000269" key="5">
    <source>
    </source>
</evidence>
<evidence type="ECO:0000269" key="6">
    <source>
    </source>
</evidence>
<evidence type="ECO:0000269" key="7">
    <source>
    </source>
</evidence>
<evidence type="ECO:0000269" key="8">
    <source>
    </source>
</evidence>
<evidence type="ECO:0000269" key="9">
    <source>
    </source>
</evidence>
<evidence type="ECO:0000303" key="10">
    <source>
    </source>
</evidence>
<evidence type="ECO:0000303" key="11">
    <source>
    </source>
</evidence>
<evidence type="ECO:0000305" key="12"/>
<evidence type="ECO:0000305" key="13">
    <source>
    </source>
</evidence>
<feature type="chain" id="PRO_0000453451" description="Short chain dehydrogenase/reductase AacuN">
    <location>
        <begin position="1"/>
        <end position="264"/>
    </location>
</feature>
<feature type="active site" description="Proton donor" evidence="2">
    <location>
        <position position="146"/>
    </location>
</feature>
<feature type="active site" description="Proton donor" evidence="2">
    <location>
        <position position="147"/>
    </location>
</feature>
<feature type="active site" description="Proton donor" evidence="2">
    <location>
        <position position="161"/>
    </location>
</feature>
<feature type="active site" description="Lowers pKa of active site Tyr" evidence="2">
    <location>
        <position position="165"/>
    </location>
</feature>
<feature type="binding site" evidence="1">
    <location>
        <position position="24"/>
    </location>
    <ligand>
        <name>NADP(+)</name>
        <dbReference type="ChEBI" id="CHEBI:58349"/>
    </ligand>
</feature>
<feature type="binding site" evidence="1">
    <location>
        <position position="70"/>
    </location>
    <ligand>
        <name>NADP(+)</name>
        <dbReference type="ChEBI" id="CHEBI:58349"/>
    </ligand>
</feature>
<feature type="binding site" evidence="2">
    <location>
        <position position="97"/>
    </location>
    <ligand>
        <name>NADP(+)</name>
        <dbReference type="ChEBI" id="CHEBI:58349"/>
    </ligand>
</feature>
<feature type="binding site" evidence="1">
    <location>
        <position position="130"/>
    </location>
    <ligand>
        <name>NADP(+)</name>
        <dbReference type="ChEBI" id="CHEBI:58349"/>
    </ligand>
</feature>
<feature type="binding site" evidence="2">
    <location>
        <position position="161"/>
    </location>
    <ligand>
        <name>NADP(+)</name>
        <dbReference type="ChEBI" id="CHEBI:58349"/>
    </ligand>
</feature>
<feature type="binding site" evidence="2">
    <location>
        <position position="165"/>
    </location>
    <ligand>
        <name>NADP(+)</name>
        <dbReference type="ChEBI" id="CHEBI:58349"/>
    </ligand>
</feature>
<feature type="binding site" evidence="1">
    <location>
        <position position="196"/>
    </location>
    <ligand>
        <name>NADP(+)</name>
        <dbReference type="ChEBI" id="CHEBI:58349"/>
    </ligand>
</feature>
<dbReference type="EC" id="1.3.1.-" evidence="3"/>
<dbReference type="EMBL" id="KV878984">
    <property type="protein sequence ID" value="OJJ97025.1"/>
    <property type="molecule type" value="Genomic_DNA"/>
</dbReference>
<dbReference type="RefSeq" id="XP_020053365.1">
    <property type="nucleotide sequence ID" value="XM_020199994.1"/>
</dbReference>
<dbReference type="SMR" id="A0A1L9WLH9"/>
<dbReference type="STRING" id="690307.A0A1L9WLH9"/>
<dbReference type="GeneID" id="30973808"/>
<dbReference type="VEuPathDB" id="FungiDB:ASPACDRAFT_33834"/>
<dbReference type="OMA" id="VGQRAWP"/>
<dbReference type="OrthoDB" id="47007at2759"/>
<dbReference type="Proteomes" id="UP000184546">
    <property type="component" value="Unassembled WGS sequence"/>
</dbReference>
<dbReference type="GO" id="GO:0016491">
    <property type="term" value="F:oxidoreductase activity"/>
    <property type="evidence" value="ECO:0007669"/>
    <property type="project" value="UniProtKB-KW"/>
</dbReference>
<dbReference type="GO" id="GO:0044550">
    <property type="term" value="P:secondary metabolite biosynthetic process"/>
    <property type="evidence" value="ECO:0007669"/>
    <property type="project" value="UniProtKB-ARBA"/>
</dbReference>
<dbReference type="CDD" id="cd05362">
    <property type="entry name" value="THN_reductase-like_SDR_c"/>
    <property type="match status" value="1"/>
</dbReference>
<dbReference type="FunFam" id="3.40.50.720:FF:000084">
    <property type="entry name" value="Short-chain dehydrogenase reductase"/>
    <property type="match status" value="1"/>
</dbReference>
<dbReference type="Gene3D" id="3.40.50.720">
    <property type="entry name" value="NAD(P)-binding Rossmann-like Domain"/>
    <property type="match status" value="1"/>
</dbReference>
<dbReference type="InterPro" id="IPR036291">
    <property type="entry name" value="NAD(P)-bd_dom_sf"/>
</dbReference>
<dbReference type="InterPro" id="IPR020904">
    <property type="entry name" value="Sc_DH/Rdtase_CS"/>
</dbReference>
<dbReference type="InterPro" id="IPR002347">
    <property type="entry name" value="SDR_fam"/>
</dbReference>
<dbReference type="PANTHER" id="PTHR43639">
    <property type="entry name" value="OXIDOREDUCTASE, SHORT-CHAIN DEHYDROGENASE/REDUCTASE FAMILY (AFU_ORTHOLOGUE AFUA_5G02870)"/>
    <property type="match status" value="1"/>
</dbReference>
<dbReference type="PANTHER" id="PTHR43639:SF1">
    <property type="entry name" value="SHORT-CHAIN DEHYDROGENASE_REDUCTASE FAMILY PROTEIN"/>
    <property type="match status" value="1"/>
</dbReference>
<dbReference type="Pfam" id="PF13561">
    <property type="entry name" value="adh_short_C2"/>
    <property type="match status" value="1"/>
</dbReference>
<dbReference type="PRINTS" id="PR00081">
    <property type="entry name" value="GDHRDH"/>
</dbReference>
<dbReference type="PRINTS" id="PR00080">
    <property type="entry name" value="SDRFAMILY"/>
</dbReference>
<dbReference type="SUPFAM" id="SSF51735">
    <property type="entry name" value="NAD(P)-binding Rossmann-fold domains"/>
    <property type="match status" value="1"/>
</dbReference>
<dbReference type="PROSITE" id="PS00061">
    <property type="entry name" value="ADH_SHORT"/>
    <property type="match status" value="1"/>
</dbReference>
<accession>A0A1L9WLH9</accession>
<proteinExistence type="evidence at protein level"/>